<comment type="function">
    <text evidence="1 5">May act cooperatively with GRB10 to regulate tyrosine kinase receptor signaling. May increase IGF1 receptor phosphorylation under IGF1 stimulation as well as phosphorylation of IRS1 and SHC1 (By similarity).</text>
</comment>
<comment type="subunit">
    <text evidence="2 6">Interacts with GRB10 (By similarity). This transient binding is increased under IGF1 stimulation and leads to recruitment of GIGYF1/GRB10 complex to IGF1 receptor (By similarity). Interacts with DDX6 (PubMed:31439631).</text>
</comment>
<comment type="interaction">
    <interactant intactId="EBI-947774">
        <id>O75420</id>
    </interactant>
    <interactant intactId="EBI-8643161">
        <id>Q9NX04</id>
        <label>AIRIM</label>
    </interactant>
    <organismsDiffer>false</organismsDiffer>
    <experiments>3</experiments>
</comment>
<comment type="interaction">
    <interactant intactId="EBI-947774">
        <id>O75420</id>
    </interactant>
    <interactant intactId="EBI-12102070">
        <id>Q9NXR5-2</id>
        <label>ANKRD10</label>
    </interactant>
    <organismsDiffer>false</organismsDiffer>
    <experiments>3</experiments>
</comment>
<comment type="interaction">
    <interactant intactId="EBI-947774">
        <id>O75420</id>
    </interactant>
    <interactant intactId="EBI-742909">
        <id>Q9H6L4</id>
        <label>ARMC7</label>
    </interactant>
    <organismsDiffer>false</organismsDiffer>
    <experiments>3</experiments>
</comment>
<comment type="interaction">
    <interactant intactId="EBI-947774">
        <id>O75420</id>
    </interactant>
    <interactant intactId="EBI-712912">
        <id>Q9HC52</id>
        <label>CBX8</label>
    </interactant>
    <organismsDiffer>false</organismsDiffer>
    <experiments>3</experiments>
</comment>
<comment type="interaction">
    <interactant intactId="EBI-947774">
        <id>O75420</id>
    </interactant>
    <interactant intactId="EBI-10961624">
        <id>Q2TAC2-2</id>
        <label>CCDC57</label>
    </interactant>
    <organismsDiffer>false</organismsDiffer>
    <experiments>3</experiments>
</comment>
<comment type="interaction">
    <interactant intactId="EBI-947774">
        <id>O75420</id>
    </interactant>
    <interactant intactId="EBI-739773">
        <id>Q9BSW2</id>
        <label>CRACR2A</label>
    </interactant>
    <organismsDiffer>false</organismsDiffer>
    <experiments>3</experiments>
</comment>
<comment type="interaction">
    <interactant intactId="EBI-947774">
        <id>O75420</id>
    </interactant>
    <interactant intactId="EBI-351257">
        <id>P26196</id>
        <label>DDX6</label>
    </interactant>
    <organismsDiffer>false</organismsDiffer>
    <experiments>5</experiments>
</comment>
<comment type="interaction">
    <interactant intactId="EBI-947774">
        <id>O75420</id>
    </interactant>
    <interactant intactId="EBI-356015">
        <id>Q14204</id>
        <label>DYNC1H1</label>
    </interactant>
    <organismsDiffer>false</organismsDiffer>
    <experiments>2</experiments>
</comment>
<comment type="interaction">
    <interactant intactId="EBI-947774">
        <id>O75420</id>
    </interactant>
    <interactant intactId="EBI-32715389">
        <id>O60573-1</id>
        <label>EIF4E2</label>
    </interactant>
    <organismsDiffer>false</organismsDiffer>
    <experiments>12</experiments>
</comment>
<comment type="interaction">
    <interactant intactId="EBI-947774">
        <id>O75420</id>
    </interactant>
    <interactant intactId="EBI-744099">
        <id>Q9H0I2</id>
        <label>ENKD1</label>
    </interactant>
    <organismsDiffer>false</organismsDiffer>
    <experiments>3</experiments>
</comment>
<comment type="interaction">
    <interactant intactId="EBI-947774">
        <id>O75420</id>
    </interactant>
    <interactant intactId="EBI-11986315">
        <id>Q9H5Z6-2</id>
        <label>FAM124B</label>
    </interactant>
    <organismsDiffer>false</organismsDiffer>
    <experiments>3</experiments>
</comment>
<comment type="interaction">
    <interactant intactId="EBI-947774">
        <id>O75420</id>
    </interactant>
    <interactant intactId="EBI-399080">
        <id>Q92993</id>
        <label>KAT5</label>
    </interactant>
    <organismsDiffer>false</organismsDiffer>
    <experiments>3</experiments>
</comment>
<comment type="interaction">
    <interactant intactId="EBI-947774">
        <id>O75420</id>
    </interactant>
    <interactant intactId="EBI-14069005">
        <id>Q9BVG8-5</id>
        <label>KIFC3</label>
    </interactant>
    <organismsDiffer>false</organismsDiffer>
    <experiments>3</experiments>
</comment>
<comment type="interaction">
    <interactant intactId="EBI-947774">
        <id>O75420</id>
    </interactant>
    <interactant intactId="EBI-348259">
        <id>Q96EZ8</id>
        <label>MCRS1</label>
    </interactant>
    <organismsDiffer>false</organismsDiffer>
    <experiments>3</experiments>
</comment>
<comment type="interaction">
    <interactant intactId="EBI-947774">
        <id>O75420</id>
    </interactant>
    <interactant intactId="EBI-743811">
        <id>Q8NEH6</id>
        <label>MNS1</label>
    </interactant>
    <organismsDiffer>false</organismsDiffer>
    <experiments>3</experiments>
</comment>
<comment type="interaction">
    <interactant intactId="EBI-947774">
        <id>O75420</id>
    </interactant>
    <interactant intactId="EBI-11750983">
        <id>Q9HC98-4</id>
        <label>NEK6</label>
    </interactant>
    <organismsDiffer>false</organismsDiffer>
    <experiments>3</experiments>
</comment>
<comment type="interaction">
    <interactant intactId="EBI-947774">
        <id>O75420</id>
    </interactant>
    <interactant intactId="EBI-10271199">
        <id>Q8NI38</id>
        <label>NFKBID</label>
    </interactant>
    <organismsDiffer>false</organismsDiffer>
    <experiments>3</experiments>
</comment>
<comment type="interaction">
    <interactant intactId="EBI-947774">
        <id>O75420</id>
    </interactant>
    <interactant intactId="EBI-1383852">
        <id>P54646</id>
        <label>PRKAA2</label>
    </interactant>
    <organismsDiffer>false</organismsDiffer>
    <experiments>3</experiments>
</comment>
<comment type="interaction">
    <interactant intactId="EBI-947774">
        <id>O75420</id>
    </interactant>
    <interactant intactId="EBI-11986293">
        <id>P0CG20</id>
        <label>PRR35</label>
    </interactant>
    <organismsDiffer>false</organismsDiffer>
    <experiments>3</experiments>
</comment>
<comment type="interaction">
    <interactant intactId="EBI-947774">
        <id>O75420</id>
    </interactant>
    <interactant intactId="EBI-2602260">
        <id>Q9NW64</id>
        <label>RBM22</label>
    </interactant>
    <organismsDiffer>false</organismsDiffer>
    <experiments>3</experiments>
</comment>
<comment type="interaction">
    <interactant intactId="EBI-947774">
        <id>O75420</id>
    </interactant>
    <interactant intactId="EBI-7954236">
        <id>Q9UPN6</id>
        <label>SCAF8</label>
    </interactant>
    <organismsDiffer>false</organismsDiffer>
    <experiments>3</experiments>
</comment>
<comment type="interaction">
    <interactant intactId="EBI-947774">
        <id>O75420</id>
    </interactant>
    <interactant intactId="EBI-748391">
        <id>Q9BWG6</id>
        <label>SCNM1</label>
    </interactant>
    <organismsDiffer>false</organismsDiffer>
    <experiments>3</experiments>
</comment>
<comment type="interaction">
    <interactant intactId="EBI-947774">
        <id>O75420</id>
    </interactant>
    <interactant intactId="EBI-357418">
        <id>Q8TAQ2</id>
        <label>SMARCC2</label>
    </interactant>
    <organismsDiffer>false</organismsDiffer>
    <experiments>3</experiments>
</comment>
<comment type="interaction">
    <interactant intactId="EBI-947774">
        <id>O75420</id>
    </interactant>
    <interactant intactId="EBI-358489">
        <id>Q96GM5</id>
        <label>SMARCD1</label>
    </interactant>
    <organismsDiffer>false</organismsDiffer>
    <experiments>3</experiments>
</comment>
<comment type="interaction">
    <interactant intactId="EBI-947774">
        <id>O75420</id>
    </interactant>
    <interactant intactId="EBI-607085">
        <id>P09012</id>
        <label>SNRPA</label>
    </interactant>
    <organismsDiffer>false</organismsDiffer>
    <experiments>3</experiments>
</comment>
<comment type="interaction">
    <interactant intactId="EBI-947774">
        <id>O75420</id>
    </interactant>
    <interactant intactId="EBI-372475">
        <id>P14678-2</id>
        <label>SNRPB</label>
    </interactant>
    <organismsDiffer>false</organismsDiffer>
    <experiments>5</experiments>
</comment>
<comment type="interaction">
    <interactant intactId="EBI-947774">
        <id>O75420</id>
    </interactant>
    <interactant intactId="EBI-766589">
        <id>P09234</id>
        <label>SNRPC</label>
    </interactant>
    <organismsDiffer>false</organismsDiffer>
    <experiments>3</experiments>
</comment>
<comment type="interaction">
    <interactant intactId="EBI-947774">
        <id>O75420</id>
    </interactant>
    <interactant intactId="EBI-11959123">
        <id>Q99932-2</id>
        <label>SPAG8</label>
    </interactant>
    <organismsDiffer>false</organismsDiffer>
    <experiments>3</experiments>
</comment>
<comment type="interaction">
    <interactant intactId="EBI-947774">
        <id>O75420</id>
    </interactant>
    <interactant intactId="EBI-745680">
        <id>Q96MF2</id>
        <label>STAC3</label>
    </interactant>
    <organismsDiffer>false</organismsDiffer>
    <experiments>4</experiments>
</comment>
<comment type="interaction">
    <interactant intactId="EBI-947774">
        <id>O75420</id>
    </interactant>
    <interactant intactId="EBI-710310">
        <id>Q15560</id>
        <label>TCEA2</label>
    </interactant>
    <organismsDiffer>false</organismsDiffer>
    <experiments>3</experiments>
</comment>
<comment type="interaction">
    <interactant intactId="EBI-947774">
        <id>O75420</id>
    </interactant>
    <interactant intactId="EBI-11741437">
        <id>Q08117-2</id>
        <label>TLE5</label>
    </interactant>
    <organismsDiffer>false</organismsDiffer>
    <experiments>3</experiments>
</comment>
<comment type="interaction">
    <interactant intactId="EBI-947774">
        <id>O75420</id>
    </interactant>
    <interactant intactId="EBI-2349743">
        <id>Q12815</id>
        <label>TROAP</label>
    </interactant>
    <organismsDiffer>false</organismsDiffer>
    <experiments>3</experiments>
</comment>
<comment type="interaction">
    <interactant intactId="EBI-947774">
        <id>O75420</id>
    </interactant>
    <interactant intactId="EBI-10687282">
        <id>Q9NRE2</id>
        <label>TSHZ2</label>
    </interactant>
    <organismsDiffer>false</organismsDiffer>
    <experiments>3</experiments>
</comment>
<comment type="interaction">
    <interactant intactId="EBI-947774">
        <id>O75420</id>
    </interactant>
    <interactant intactId="EBI-719433">
        <id>Q86UK7</id>
        <label>ZNF598</label>
    </interactant>
    <organismsDiffer>false</organismsDiffer>
    <experiments>2</experiments>
</comment>
<comment type="domain">
    <text evidence="1">The GYF domain interacts with GRB10.</text>
</comment>
<comment type="similarity">
    <text evidence="7">Belongs to the GIGYF family.</text>
</comment>
<comment type="sequence caution" evidence="7">
    <conflict type="erroneous gene model prediction">
        <sequence resource="EMBL-CDS" id="AAC78792"/>
    </conflict>
</comment>
<comment type="sequence caution" evidence="7">
    <conflict type="frameshift">
        <sequence resource="EMBL-CDS" id="AAL55738"/>
    </conflict>
</comment>
<feature type="chain" id="PRO_0000058314" description="GRB10-interacting GYF protein 1">
    <location>
        <begin position="1"/>
        <end position="1035"/>
    </location>
</feature>
<feature type="domain" description="GYF" evidence="3">
    <location>
        <begin position="474"/>
        <end position="522"/>
    </location>
</feature>
<feature type="region of interest" description="Disordered" evidence="4">
    <location>
        <begin position="105"/>
        <end position="422"/>
    </location>
</feature>
<feature type="region of interest" description="Disordered" evidence="4">
    <location>
        <begin position="621"/>
        <end position="640"/>
    </location>
</feature>
<feature type="region of interest" description="Disordered" evidence="4">
    <location>
        <begin position="696"/>
        <end position="724"/>
    </location>
</feature>
<feature type="region of interest" description="Disordered" evidence="4">
    <location>
        <begin position="825"/>
        <end position="879"/>
    </location>
</feature>
<feature type="compositionally biased region" description="Basic and acidic residues" evidence="4">
    <location>
        <begin position="148"/>
        <end position="179"/>
    </location>
</feature>
<feature type="compositionally biased region" description="Basic and acidic residues" evidence="4">
    <location>
        <begin position="186"/>
        <end position="203"/>
    </location>
</feature>
<feature type="compositionally biased region" description="Basic and acidic residues" evidence="4">
    <location>
        <begin position="239"/>
        <end position="267"/>
    </location>
</feature>
<feature type="compositionally biased region" description="Acidic residues" evidence="4">
    <location>
        <begin position="295"/>
        <end position="304"/>
    </location>
</feature>
<feature type="compositionally biased region" description="Acidic residues" evidence="4">
    <location>
        <begin position="324"/>
        <end position="349"/>
    </location>
</feature>
<feature type="compositionally biased region" description="Low complexity" evidence="4">
    <location>
        <begin position="367"/>
        <end position="378"/>
    </location>
</feature>
<feature type="compositionally biased region" description="Basic and acidic residues" evidence="4">
    <location>
        <begin position="388"/>
        <end position="401"/>
    </location>
</feature>
<feature type="compositionally biased region" description="Low complexity" evidence="4">
    <location>
        <begin position="406"/>
        <end position="417"/>
    </location>
</feature>
<feature type="compositionally biased region" description="Polar residues" evidence="4">
    <location>
        <begin position="629"/>
        <end position="639"/>
    </location>
</feature>
<feature type="compositionally biased region" description="Basic and acidic residues" evidence="4">
    <location>
        <begin position="696"/>
        <end position="722"/>
    </location>
</feature>
<feature type="compositionally biased region" description="Low complexity" evidence="4">
    <location>
        <begin position="857"/>
        <end position="874"/>
    </location>
</feature>
<feature type="modified residue" description="Phosphoserine" evidence="10 11">
    <location>
        <position position="24"/>
    </location>
</feature>
<feature type="modified residue" description="Phosphoserine" evidence="10">
    <location>
        <position position="28"/>
    </location>
</feature>
<feature type="modified residue" description="Phosphoserine" evidence="9 11">
    <location>
        <position position="137"/>
    </location>
</feature>
<feature type="modified residue" description="Phosphoserine" evidence="11">
    <location>
        <position position="157"/>
    </location>
</feature>
<feature type="modified residue" description="Phosphoserine" evidence="12">
    <location>
        <position position="230"/>
    </location>
</feature>
<feature type="modified residue" description="Phosphoserine" evidence="2">
    <location>
        <position position="341"/>
    </location>
</feature>
<feature type="modified residue" description="Phosphoserine" evidence="11">
    <location>
        <position position="406"/>
    </location>
</feature>
<feature type="modified residue" description="Phosphoserine" evidence="11">
    <location>
        <position position="538"/>
    </location>
</feature>
<feature type="modified residue" description="Phosphoserine" evidence="8 11">
    <location>
        <position position="638"/>
    </location>
</feature>
<feature type="modified residue" description="Phosphoserine" evidence="11">
    <location>
        <position position="862"/>
    </location>
</feature>
<feature type="mutagenesis site" description="Abolishes interaction with DDX6." evidence="6">
    <original>W</original>
    <variation>A</variation>
    <location>
        <position position="294"/>
    </location>
</feature>
<feature type="mutagenesis site" description="Abolishes interaction with DDX6; when associated with A-312." evidence="6">
    <original>F</original>
    <variation>A</variation>
    <location>
        <position position="306"/>
    </location>
</feature>
<feature type="mutagenesis site" description="Abolishes interaction with DDX6; when associated with A-306." evidence="6">
    <original>F</original>
    <variation>A</variation>
    <location>
        <position position="312"/>
    </location>
</feature>
<feature type="sequence conflict" description="In Ref. 3; AAL55738." evidence="7" ref="3">
    <original>RK</original>
    <variation>DE</variation>
    <location>
        <begin position="729"/>
        <end position="730"/>
    </location>
</feature>
<feature type="sequence conflict" description="In Ref. 3; AAL55738." evidence="7" ref="3">
    <original>S</original>
    <variation>T</variation>
    <location>
        <position position="835"/>
    </location>
</feature>
<feature type="sequence conflict" description="In Ref. 3; AAL55738." evidence="7" ref="3">
    <original>L</original>
    <variation>V</variation>
    <location>
        <position position="851"/>
    </location>
</feature>
<feature type="helix" evidence="13">
    <location>
        <begin position="43"/>
        <end position="48"/>
    </location>
</feature>
<feature type="helix" evidence="13">
    <location>
        <begin position="58"/>
        <end position="61"/>
    </location>
</feature>
<feature type="helix" evidence="13">
    <location>
        <begin position="63"/>
        <end position="65"/>
    </location>
</feature>
<feature type="turn" evidence="13">
    <location>
        <begin position="66"/>
        <end position="68"/>
    </location>
</feature>
<feature type="helix" evidence="13">
    <location>
        <begin position="77"/>
        <end position="79"/>
    </location>
</feature>
<feature type="helix" evidence="13">
    <location>
        <begin position="84"/>
        <end position="92"/>
    </location>
</feature>
<feature type="helix" evidence="13">
    <location>
        <begin position="97"/>
        <end position="100"/>
    </location>
</feature>
<feature type="strand" evidence="14">
    <location>
        <begin position="475"/>
        <end position="480"/>
    </location>
</feature>
<feature type="strand" evidence="14">
    <location>
        <begin position="486"/>
        <end position="491"/>
    </location>
</feature>
<feature type="helix" evidence="14">
    <location>
        <begin position="492"/>
        <end position="501"/>
    </location>
</feature>
<feature type="strand" evidence="14">
    <location>
        <begin position="509"/>
        <end position="512"/>
    </location>
</feature>
<feature type="strand" evidence="14">
    <location>
        <begin position="515"/>
        <end position="517"/>
    </location>
</feature>
<feature type="helix" evidence="14">
    <location>
        <begin position="521"/>
        <end position="528"/>
    </location>
</feature>
<dbReference type="EMBL" id="AF053356">
    <property type="protein sequence ID" value="AAC78792.1"/>
    <property type="status" value="ALT_SEQ"/>
    <property type="molecule type" value="Genomic_DNA"/>
</dbReference>
<dbReference type="EMBL" id="AY176044">
    <property type="protein sequence ID" value="AAO46888.1"/>
    <property type="molecule type" value="mRNA"/>
</dbReference>
<dbReference type="EMBL" id="AF289554">
    <property type="protein sequence ID" value="AAL55738.1"/>
    <property type="status" value="ALT_FRAME"/>
    <property type="molecule type" value="mRNA"/>
</dbReference>
<dbReference type="CCDS" id="CCDS34708.1"/>
<dbReference type="RefSeq" id="NP_001362694.1">
    <property type="nucleotide sequence ID" value="NM_001375765.1"/>
</dbReference>
<dbReference type="RefSeq" id="NP_001362695.1">
    <property type="nucleotide sequence ID" value="NM_001375766.1"/>
</dbReference>
<dbReference type="RefSeq" id="NP_072096.2">
    <property type="nucleotide sequence ID" value="NM_022574.4"/>
</dbReference>
<dbReference type="RefSeq" id="XP_005250589.1">
    <property type="nucleotide sequence ID" value="XM_005250532.1"/>
</dbReference>
<dbReference type="PDB" id="5NVK">
    <property type="method" value="X-ray"/>
    <property type="resolution" value="2.90 A"/>
    <property type="chains" value="B/D/F/H=33-103"/>
</dbReference>
<dbReference type="PDB" id="7RUQ">
    <property type="method" value="X-ray"/>
    <property type="resolution" value="1.79 A"/>
    <property type="chains" value="A/C=470-538"/>
</dbReference>
<dbReference type="PDBsum" id="5NVK"/>
<dbReference type="PDBsum" id="7RUQ"/>
<dbReference type="SMR" id="O75420"/>
<dbReference type="BioGRID" id="122218">
    <property type="interactions" value="185"/>
</dbReference>
<dbReference type="ComplexPortal" id="CPX-2336">
    <property type="entry name" value="4EHP-GIGYF1 co-translational mRNA decay complex, ZNF598 variant"/>
</dbReference>
<dbReference type="ComplexPortal" id="CPX-2342">
    <property type="entry name" value="4EHP-GIGYF1 co-translational mRNA decay complex, DDX6 variant"/>
</dbReference>
<dbReference type="FunCoup" id="O75420">
    <property type="interactions" value="1093"/>
</dbReference>
<dbReference type="IntAct" id="O75420">
    <property type="interactions" value="102"/>
</dbReference>
<dbReference type="MINT" id="O75420"/>
<dbReference type="STRING" id="9606.ENSP00000275732"/>
<dbReference type="GlyCosmos" id="O75420">
    <property type="glycosylation" value="1 site, 1 glycan"/>
</dbReference>
<dbReference type="GlyGen" id="O75420">
    <property type="glycosylation" value="2 sites, 1 O-linked glycan (2 sites)"/>
</dbReference>
<dbReference type="iPTMnet" id="O75420"/>
<dbReference type="PhosphoSitePlus" id="O75420"/>
<dbReference type="BioMuta" id="GIGYF1"/>
<dbReference type="jPOST" id="O75420"/>
<dbReference type="MassIVE" id="O75420"/>
<dbReference type="PaxDb" id="9606-ENSP00000275732"/>
<dbReference type="PeptideAtlas" id="O75420"/>
<dbReference type="ProteomicsDB" id="49992"/>
<dbReference type="Pumba" id="O75420"/>
<dbReference type="Antibodypedia" id="16628">
    <property type="antibodies" value="82 antibodies from 16 providers"/>
</dbReference>
<dbReference type="DNASU" id="64599"/>
<dbReference type="Ensembl" id="ENST00000275732.5">
    <property type="protein sequence ID" value="ENSP00000275732.4"/>
    <property type="gene ID" value="ENSG00000146830.11"/>
</dbReference>
<dbReference type="Ensembl" id="ENST00000646601.1">
    <property type="protein sequence ID" value="ENSP00000494292.1"/>
    <property type="gene ID" value="ENSG00000146830.11"/>
</dbReference>
<dbReference type="Ensembl" id="ENST00000678049.1">
    <property type="protein sequence ID" value="ENSP00000503354.1"/>
    <property type="gene ID" value="ENSG00000146830.11"/>
</dbReference>
<dbReference type="GeneID" id="64599"/>
<dbReference type="MANE-Select" id="ENST00000678049.1">
    <property type="protein sequence ID" value="ENSP00000503354.1"/>
    <property type="RefSeq nucleotide sequence ID" value="NM_001375765.1"/>
    <property type="RefSeq protein sequence ID" value="NP_001362694.1"/>
</dbReference>
<dbReference type="UCSC" id="uc003uwg.2">
    <property type="organism name" value="human"/>
</dbReference>
<dbReference type="AGR" id="HGNC:9126"/>
<dbReference type="GeneCards" id="GIGYF1"/>
<dbReference type="HGNC" id="HGNC:9126">
    <property type="gene designation" value="GIGYF1"/>
</dbReference>
<dbReference type="HPA" id="ENSG00000146830">
    <property type="expression patterns" value="Low tissue specificity"/>
</dbReference>
<dbReference type="MalaCards" id="GIGYF1"/>
<dbReference type="MIM" id="612064">
    <property type="type" value="gene"/>
</dbReference>
<dbReference type="neXtProt" id="NX_O75420"/>
<dbReference type="OpenTargets" id="ENSG00000146830"/>
<dbReference type="PharmGKB" id="PA162389554"/>
<dbReference type="VEuPathDB" id="HostDB:ENSG00000146830"/>
<dbReference type="eggNOG" id="KOG1862">
    <property type="taxonomic scope" value="Eukaryota"/>
</dbReference>
<dbReference type="GeneTree" id="ENSGT00940000159845"/>
<dbReference type="HOGENOM" id="CLU_007300_0_0_1"/>
<dbReference type="InParanoid" id="O75420"/>
<dbReference type="OMA" id="FHNTGEC"/>
<dbReference type="OrthoDB" id="48509at2759"/>
<dbReference type="PAN-GO" id="O75420">
    <property type="GO annotations" value="2 GO annotations based on evolutionary models"/>
</dbReference>
<dbReference type="PhylomeDB" id="O75420"/>
<dbReference type="TreeFam" id="TF325513"/>
<dbReference type="PathwayCommons" id="O75420"/>
<dbReference type="SignaLink" id="O75420"/>
<dbReference type="SIGNOR" id="O75420"/>
<dbReference type="BioGRID-ORCS" id="64599">
    <property type="hits" value="27 hits in 1151 CRISPR screens"/>
</dbReference>
<dbReference type="CD-CODE" id="DEE660B4">
    <property type="entry name" value="Stress granule"/>
</dbReference>
<dbReference type="ChiTaRS" id="GIGYF1">
    <property type="organism name" value="human"/>
</dbReference>
<dbReference type="GenomeRNAi" id="64599"/>
<dbReference type="Pharos" id="O75420">
    <property type="development level" value="Tbio"/>
</dbReference>
<dbReference type="PRO" id="PR:O75420"/>
<dbReference type="Proteomes" id="UP000005640">
    <property type="component" value="Chromosome 7"/>
</dbReference>
<dbReference type="RNAct" id="O75420">
    <property type="molecule type" value="protein"/>
</dbReference>
<dbReference type="Bgee" id="ENSG00000146830">
    <property type="expression patterns" value="Expressed in sural nerve and 170 other cell types or tissues"/>
</dbReference>
<dbReference type="GO" id="GO:0005829">
    <property type="term" value="C:cytosol"/>
    <property type="evidence" value="ECO:0000318"/>
    <property type="project" value="GO_Central"/>
</dbReference>
<dbReference type="GO" id="GO:0032991">
    <property type="term" value="C:protein-containing complex"/>
    <property type="evidence" value="ECO:0000314"/>
    <property type="project" value="UniProtKB"/>
</dbReference>
<dbReference type="GO" id="GO:0048009">
    <property type="term" value="P:insulin-like growth factor receptor signaling pathway"/>
    <property type="evidence" value="ECO:0000318"/>
    <property type="project" value="GO_Central"/>
</dbReference>
<dbReference type="CDD" id="cd00072">
    <property type="entry name" value="GYF"/>
    <property type="match status" value="1"/>
</dbReference>
<dbReference type="FunFam" id="3.30.1490.40:FF:000001">
    <property type="entry name" value="GRB10-interacting GYF protein 2 isoform X1"/>
    <property type="match status" value="1"/>
</dbReference>
<dbReference type="Gene3D" id="3.30.1490.40">
    <property type="match status" value="1"/>
</dbReference>
<dbReference type="InterPro" id="IPR051640">
    <property type="entry name" value="GRB10-interact_GYF"/>
</dbReference>
<dbReference type="InterPro" id="IPR003169">
    <property type="entry name" value="GYF"/>
</dbReference>
<dbReference type="InterPro" id="IPR035445">
    <property type="entry name" value="GYF-like_dom_sf"/>
</dbReference>
<dbReference type="PANTHER" id="PTHR14445">
    <property type="entry name" value="GRB10 INTERACTING GYF PROTEIN"/>
    <property type="match status" value="1"/>
</dbReference>
<dbReference type="PANTHER" id="PTHR14445:SF37">
    <property type="entry name" value="GRB10-INTERACTING GYF PROTEIN 1"/>
    <property type="match status" value="1"/>
</dbReference>
<dbReference type="Pfam" id="PF02213">
    <property type="entry name" value="GYF"/>
    <property type="match status" value="1"/>
</dbReference>
<dbReference type="SMART" id="SM00444">
    <property type="entry name" value="GYF"/>
    <property type="match status" value="1"/>
</dbReference>
<dbReference type="SUPFAM" id="SSF55277">
    <property type="entry name" value="GYF domain"/>
    <property type="match status" value="1"/>
</dbReference>
<dbReference type="PROSITE" id="PS50829">
    <property type="entry name" value="GYF"/>
    <property type="match status" value="1"/>
</dbReference>
<keyword id="KW-0002">3D-structure</keyword>
<keyword id="KW-0597">Phosphoprotein</keyword>
<keyword id="KW-1267">Proteomics identification</keyword>
<keyword id="KW-1185">Reference proteome</keyword>
<accession>O75420</accession>
<accession>Q6Y7W7</accession>
<accession>Q8WZ38</accession>
<gene>
    <name type="primary">GIGYF1</name>
    <name type="synonym">CDS2</name>
    <name type="synonym">PERQ1</name>
    <name type="ORF">PP3360</name>
</gene>
<proteinExistence type="evidence at protein level"/>
<name>GGYF1_HUMAN</name>
<sequence length="1035" mass="114601">MAAETLNFGPEWLRALSGGGSVASPPPSPAMPKYKLADYRYGREEMLALYVKENKVPEELQDKEFAAVLQDEPLQPLALEPLTEEEQRNFSLSVNSVAVLRLMGKGAGPPLAGTSRGRGSTRSRGRGRGDSCFYQRSIEEGDGAFGRSPREIQRSQSWDDRGERRFEKSARRDGARCGFEEGGAGPRKEHARSDSENWRSLREEQEEEEEGSWRLGAGPRRDGDRWRSASPDGGPRSAGWREHGERRRKFEFDLRGDRGGCGEEEGRGGGGSSHLRRCRAPEGFEEDKDGLPEWCLDDEDEEMGTFDASGAFLPLKKGPKEPIPEEQELDFQGLEEEEEPSEGLEEEGPEAGGKELTPLPPQEEKSSSPSPLPTLGPLWGTNGDGDETAEKEPPAAEDDIRGIQLSPGVGSSAGPPGDLEDDEGLKHLQQEAEKLVASLQDSSLEEEQFTAAMQTQGLRHSAAATALPLSHGAARKWFYKDPQGEIQGPFTTQEMAEWFQAGYFSMSLLVKRGCDEGFQPLGEVIKMWGRVPFAPGPSPPPLLGNMDQERLKKQQELAAAALYQQLQHQQFLQLVSSRQLPQCALREKAALGDLTPPPPPPPQQQQQQLTAFLQQLQALKPPRGGDQNLLPTMSRSLSVPDSGRLWDVHTSASSQSGGEASLWDIPINSSTQGPILEQLQLQHKFQERREVELRAKREEEERKRREEKRRQQQQEEQKRRQEEEELFRRKHVRQQELLLKLLQQQQAVPVPPAPSSPPPLWAGLAKQGLSMKTLLELQLEGERQLHKQPPPREPARAQAPNHRVQLGGLGTAPLNQWVSEAGPLWGGPDKSGGGSSGLGLWEDTPKSGGSLVRGLGLKNSRSSPSLSDSYSHLSGRPIRKKTEEEEKLLKLLQGIPRPQDGFTQWCEQMLHTLSATGSLDVPMAVAILKEVESPYDVHDYIRSCLGDTLEAKEFAKQFLERRAKQKASQQRQQQQEAWLSSASLQTAFQANHSTKLGPGEGSKAKRRALMLHSDPSILGYSLHGSSGEIESVDDY</sequence>
<organism>
    <name type="scientific">Homo sapiens</name>
    <name type="common">Human</name>
    <dbReference type="NCBI Taxonomy" id="9606"/>
    <lineage>
        <taxon>Eukaryota</taxon>
        <taxon>Metazoa</taxon>
        <taxon>Chordata</taxon>
        <taxon>Craniata</taxon>
        <taxon>Vertebrata</taxon>
        <taxon>Euteleostomi</taxon>
        <taxon>Mammalia</taxon>
        <taxon>Eutheria</taxon>
        <taxon>Euarchontoglires</taxon>
        <taxon>Primates</taxon>
        <taxon>Haplorrhini</taxon>
        <taxon>Catarrhini</taxon>
        <taxon>Hominidae</taxon>
        <taxon>Homo</taxon>
    </lineage>
</organism>
<evidence type="ECO:0000250" key="1"/>
<evidence type="ECO:0000250" key="2">
    <source>
        <dbReference type="UniProtKB" id="Q99MR1"/>
    </source>
</evidence>
<evidence type="ECO:0000255" key="3">
    <source>
        <dbReference type="PROSITE-ProRule" id="PRU00101"/>
    </source>
</evidence>
<evidence type="ECO:0000256" key="4">
    <source>
        <dbReference type="SAM" id="MobiDB-lite"/>
    </source>
</evidence>
<evidence type="ECO:0000269" key="5">
    <source>
    </source>
</evidence>
<evidence type="ECO:0000269" key="6">
    <source>
    </source>
</evidence>
<evidence type="ECO:0000305" key="7"/>
<evidence type="ECO:0007744" key="8">
    <source>
    </source>
</evidence>
<evidence type="ECO:0007744" key="9">
    <source>
    </source>
</evidence>
<evidence type="ECO:0007744" key="10">
    <source>
    </source>
</evidence>
<evidence type="ECO:0007744" key="11">
    <source>
    </source>
</evidence>
<evidence type="ECO:0007744" key="12">
    <source>
    </source>
</evidence>
<evidence type="ECO:0007829" key="13">
    <source>
        <dbReference type="PDB" id="5NVK"/>
    </source>
</evidence>
<evidence type="ECO:0007829" key="14">
    <source>
        <dbReference type="PDB" id="7RUQ"/>
    </source>
</evidence>
<reference key="1">
    <citation type="journal article" date="1998" name="Genome Res.">
        <title>Large-scale sequencing of two regions in human chromosome 7q22: analysis of 650 kb of genomic sequence around the EPO and CUTL1 loci reveals 17 genes.</title>
        <authorList>
            <person name="Gloeckner G."/>
            <person name="Scherer S."/>
            <person name="Schattevoy R."/>
            <person name="Boright A.P."/>
            <person name="Weber J."/>
            <person name="Tsui L.-C."/>
            <person name="Rosenthal A."/>
        </authorList>
    </citation>
    <scope>NUCLEOTIDE SEQUENCE [GENOMIC DNA]</scope>
</reference>
<reference key="2">
    <citation type="journal article" date="2003" name="J. Biol. Chem.">
        <title>Two novel proteins that are linked to insulin-like growth factor (IGF-I) receptors by the Grb10 adapter and modulate IGF-I signaling.</title>
        <authorList>
            <person name="Giovannone B."/>
            <person name="Lee E."/>
            <person name="Laviola L."/>
            <person name="Giorgino F."/>
            <person name="Cleveland K.A."/>
            <person name="Smith R.J."/>
        </authorList>
    </citation>
    <scope>NUCLEOTIDE SEQUENCE [MRNA]</scope>
    <scope>FUNCTION</scope>
    <source>
        <tissue>Placenta</tissue>
    </source>
</reference>
<reference key="3">
    <citation type="journal article" date="2004" name="Proc. Natl. Acad. Sci. U.S.A.">
        <title>Large-scale cDNA transfection screening for genes related to cancer development and progression.</title>
        <authorList>
            <person name="Wan D."/>
            <person name="Gong Y."/>
            <person name="Qin W."/>
            <person name="Zhang P."/>
            <person name="Li J."/>
            <person name="Wei L."/>
            <person name="Zhou X."/>
            <person name="Li H."/>
            <person name="Qiu X."/>
            <person name="Zhong F."/>
            <person name="He L."/>
            <person name="Yu J."/>
            <person name="Yao G."/>
            <person name="Jiang H."/>
            <person name="Qian L."/>
            <person name="Yu Y."/>
            <person name="Shu H."/>
            <person name="Chen X."/>
            <person name="Xu H."/>
            <person name="Guo M."/>
            <person name="Pan Z."/>
            <person name="Chen Y."/>
            <person name="Ge C."/>
            <person name="Yang S."/>
            <person name="Gu J."/>
        </authorList>
    </citation>
    <scope>NUCLEOTIDE SEQUENCE [LARGE SCALE MRNA] OF 729-1035</scope>
</reference>
<reference key="4">
    <citation type="journal article" date="2008" name="Proc. Natl. Acad. Sci. U.S.A.">
        <title>A quantitative atlas of mitotic phosphorylation.</title>
        <authorList>
            <person name="Dephoure N."/>
            <person name="Zhou C."/>
            <person name="Villen J."/>
            <person name="Beausoleil S.A."/>
            <person name="Bakalarski C.E."/>
            <person name="Elledge S.J."/>
            <person name="Gygi S.P."/>
        </authorList>
    </citation>
    <scope>PHOSPHORYLATION [LARGE SCALE ANALYSIS] AT SER-638</scope>
    <scope>IDENTIFICATION BY MASS SPECTROMETRY [LARGE SCALE ANALYSIS]</scope>
    <source>
        <tissue>Cervix carcinoma</tissue>
    </source>
</reference>
<reference key="5">
    <citation type="journal article" date="2009" name="Sci. Signal.">
        <title>Quantitative phosphoproteomic analysis of T cell receptor signaling reveals system-wide modulation of protein-protein interactions.</title>
        <authorList>
            <person name="Mayya V."/>
            <person name="Lundgren D.H."/>
            <person name="Hwang S.-I."/>
            <person name="Rezaul K."/>
            <person name="Wu L."/>
            <person name="Eng J.K."/>
            <person name="Rodionov V."/>
            <person name="Han D.K."/>
        </authorList>
    </citation>
    <scope>PHOSPHORYLATION [LARGE SCALE ANALYSIS] AT SER-137</scope>
    <scope>IDENTIFICATION BY MASS SPECTROMETRY [LARGE SCALE ANALYSIS]</scope>
    <source>
        <tissue>Leukemic T-cell</tissue>
    </source>
</reference>
<reference key="6">
    <citation type="journal article" date="2010" name="Sci. Signal.">
        <title>Quantitative phosphoproteomics reveals widespread full phosphorylation site occupancy during mitosis.</title>
        <authorList>
            <person name="Olsen J.V."/>
            <person name="Vermeulen M."/>
            <person name="Santamaria A."/>
            <person name="Kumar C."/>
            <person name="Miller M.L."/>
            <person name="Jensen L.J."/>
            <person name="Gnad F."/>
            <person name="Cox J."/>
            <person name="Jensen T.S."/>
            <person name="Nigg E.A."/>
            <person name="Brunak S."/>
            <person name="Mann M."/>
        </authorList>
    </citation>
    <scope>PHOSPHORYLATION [LARGE SCALE ANALYSIS] AT SER-24 AND SER-28</scope>
    <scope>IDENTIFICATION BY MASS SPECTROMETRY [LARGE SCALE ANALYSIS]</scope>
    <source>
        <tissue>Cervix carcinoma</tissue>
    </source>
</reference>
<reference key="7">
    <citation type="journal article" date="2013" name="J. Proteome Res.">
        <title>Toward a comprehensive characterization of a human cancer cell phosphoproteome.</title>
        <authorList>
            <person name="Zhou H."/>
            <person name="Di Palma S."/>
            <person name="Preisinger C."/>
            <person name="Peng M."/>
            <person name="Polat A.N."/>
            <person name="Heck A.J."/>
            <person name="Mohammed S."/>
        </authorList>
    </citation>
    <scope>PHOSPHORYLATION [LARGE SCALE ANALYSIS] AT SER-24; SER-137; SER-157; SER-406; SER-538; SER-638 AND SER-862</scope>
    <scope>IDENTIFICATION BY MASS SPECTROMETRY [LARGE SCALE ANALYSIS]</scope>
    <source>
        <tissue>Cervix carcinoma</tissue>
        <tissue>Erythroleukemia</tissue>
    </source>
</reference>
<reference key="8">
    <citation type="journal article" date="2014" name="J. Proteomics">
        <title>An enzyme assisted RP-RPLC approach for in-depth analysis of human liver phosphoproteome.</title>
        <authorList>
            <person name="Bian Y."/>
            <person name="Song C."/>
            <person name="Cheng K."/>
            <person name="Dong M."/>
            <person name="Wang F."/>
            <person name="Huang J."/>
            <person name="Sun D."/>
            <person name="Wang L."/>
            <person name="Ye M."/>
            <person name="Zou H."/>
        </authorList>
    </citation>
    <scope>PHOSPHORYLATION [LARGE SCALE ANALYSIS] AT SER-230</scope>
    <scope>IDENTIFICATION BY MASS SPECTROMETRY [LARGE SCALE ANALYSIS]</scope>
    <source>
        <tissue>Liver</tissue>
    </source>
</reference>
<reference key="9">
    <citation type="journal article" date="2019" name="Genes Dev.">
        <title>Molecular basis for GIGYF-Me31B complex assembly in 4EHP-mediated translational repression.</title>
        <authorList>
            <person name="Peter D."/>
            <person name="Ruscica V."/>
            <person name="Bawankar P."/>
            <person name="Weber R."/>
            <person name="Helms S."/>
            <person name="Valkov E."/>
            <person name="Igreja C."/>
            <person name="Izaurralde E."/>
        </authorList>
    </citation>
    <scope>INTERACTION WITH DDX6</scope>
    <scope>MUTAGENESIS OF TRP-294; PHE-306 AND PHE-312</scope>
</reference>
<protein>
    <recommendedName>
        <fullName>GRB10-interacting GYF protein 1</fullName>
    </recommendedName>
    <alternativeName>
        <fullName>PERQ amino acid-rich with GYF domain-containing protein 1</fullName>
    </alternativeName>
</protein>